<evidence type="ECO:0000255" key="1">
    <source>
        <dbReference type="HAMAP-Rule" id="MF_00586"/>
    </source>
</evidence>
<evidence type="ECO:0000255" key="2">
    <source>
        <dbReference type="PROSITE-ProRule" id="PRU01068"/>
    </source>
</evidence>
<evidence type="ECO:0000256" key="3">
    <source>
        <dbReference type="SAM" id="MobiDB-lite"/>
    </source>
</evidence>
<protein>
    <recommendedName>
        <fullName evidence="1">Glutamyl-tRNA(Gln) amidotransferase subunit D</fullName>
        <shortName evidence="1">Glu-ADT subunit D</shortName>
        <ecNumber evidence="1">6.3.5.-</ecNumber>
    </recommendedName>
</protein>
<reference key="1">
    <citation type="journal article" date="2000" name="Proc. Natl. Acad. Sci. U.S.A.">
        <title>Genome sequence of Halobacterium species NRC-1.</title>
        <authorList>
            <person name="Ng W.V."/>
            <person name="Kennedy S.P."/>
            <person name="Mahairas G.G."/>
            <person name="Berquist B."/>
            <person name="Pan M."/>
            <person name="Shukla H.D."/>
            <person name="Lasky S.R."/>
            <person name="Baliga N.S."/>
            <person name="Thorsson V."/>
            <person name="Sbrogna J."/>
            <person name="Swartzell S."/>
            <person name="Weir D."/>
            <person name="Hall J."/>
            <person name="Dahl T.A."/>
            <person name="Welti R."/>
            <person name="Goo Y.A."/>
            <person name="Leithauser B."/>
            <person name="Keller K."/>
            <person name="Cruz R."/>
            <person name="Danson M.J."/>
            <person name="Hough D.W."/>
            <person name="Maddocks D.G."/>
            <person name="Jablonski P.E."/>
            <person name="Krebs M.P."/>
            <person name="Angevine C.M."/>
            <person name="Dale H."/>
            <person name="Isenbarger T.A."/>
            <person name="Peck R.F."/>
            <person name="Pohlschroder M."/>
            <person name="Spudich J.L."/>
            <person name="Jung K.-H."/>
            <person name="Alam M."/>
            <person name="Freitas T."/>
            <person name="Hou S."/>
            <person name="Daniels C.J."/>
            <person name="Dennis P.P."/>
            <person name="Omer A.D."/>
            <person name="Ebhardt H."/>
            <person name="Lowe T.M."/>
            <person name="Liang P."/>
            <person name="Riley M."/>
            <person name="Hood L."/>
            <person name="DasSarma S."/>
        </authorList>
    </citation>
    <scope>NUCLEOTIDE SEQUENCE [LARGE SCALE GENOMIC DNA]</scope>
    <source>
        <strain>ATCC 700922 / JCM 11081 / NRC-1</strain>
    </source>
</reference>
<sequence>MTADPGDRVRVTHGDASHEGVLVPSPSDDHLVVKLDSGYNVGVDTADADIDVLDADAVTVDGDTGEDAAGSTVEFDDDLPTIALISTGGTIASTVDYRTGAVTAQFDAEDVLRAVPDLAGRANYRGRVVANILSENMEPSIWQDLAAAVREEIEAGADGVVVMHGTDTMQFSASALSFMLETPVPVVFTGSQRSADRPSSDNVMNAVCAVEAAKSDVAEVMVCMHATESDDRCALHRGTRVRKTHTSRRDAFETVGATPLGYVDYDAASEAATADARGVTVEGAHAARGDATLDVASALEPAVELVKFTPGMNESLLAACEGSAGVVIEGTGLGHVHSDLTDTIGSLVDDGTTVVMTSQCLEGRVCDRVYDTGRDLLAAGVVEAGDTLPGTAKVKLMWALANADDPEAAMQESVAGALTTQSRPWTA</sequence>
<gene>
    <name evidence="1" type="primary">gatD</name>
    <name type="synonym">ansA</name>
    <name type="ordered locus">VNG_1844G</name>
</gene>
<organism>
    <name type="scientific">Halobacterium salinarum (strain ATCC 700922 / JCM 11081 / NRC-1)</name>
    <name type="common">Halobacterium halobium</name>
    <dbReference type="NCBI Taxonomy" id="64091"/>
    <lineage>
        <taxon>Archaea</taxon>
        <taxon>Methanobacteriati</taxon>
        <taxon>Methanobacteriota</taxon>
        <taxon>Stenosarchaea group</taxon>
        <taxon>Halobacteria</taxon>
        <taxon>Halobacteriales</taxon>
        <taxon>Halobacteriaceae</taxon>
        <taxon>Halobacterium</taxon>
        <taxon>Halobacterium salinarum NRC-34001</taxon>
    </lineage>
</organism>
<keyword id="KW-0067">ATP-binding</keyword>
<keyword id="KW-0436">Ligase</keyword>
<keyword id="KW-0547">Nucleotide-binding</keyword>
<keyword id="KW-0648">Protein biosynthesis</keyword>
<keyword id="KW-1185">Reference proteome</keyword>
<proteinExistence type="inferred from homology"/>
<dbReference type="EC" id="6.3.5.-" evidence="1"/>
<dbReference type="EMBL" id="AE004437">
    <property type="protein sequence ID" value="AAG20050.1"/>
    <property type="molecule type" value="Genomic_DNA"/>
</dbReference>
<dbReference type="PIR" id="F84335">
    <property type="entry name" value="F84335"/>
</dbReference>
<dbReference type="RefSeq" id="WP_010903349.1">
    <property type="nucleotide sequence ID" value="NC_002607.1"/>
</dbReference>
<dbReference type="SMR" id="Q9HP20"/>
<dbReference type="FunCoup" id="Q9HP20">
    <property type="interactions" value="32"/>
</dbReference>
<dbReference type="STRING" id="64091.VNG_1844G"/>
<dbReference type="PaxDb" id="64091-VNG_1844G"/>
<dbReference type="GeneID" id="68694470"/>
<dbReference type="KEGG" id="hal:VNG_1844G"/>
<dbReference type="PATRIC" id="fig|64091.14.peg.1407"/>
<dbReference type="HOGENOM" id="CLU_019134_2_1_2"/>
<dbReference type="InParanoid" id="Q9HP20"/>
<dbReference type="OrthoDB" id="371959at2157"/>
<dbReference type="PhylomeDB" id="Q9HP20"/>
<dbReference type="Proteomes" id="UP000000554">
    <property type="component" value="Chromosome"/>
</dbReference>
<dbReference type="GO" id="GO:0004067">
    <property type="term" value="F:asparaginase activity"/>
    <property type="evidence" value="ECO:0007669"/>
    <property type="project" value="InterPro"/>
</dbReference>
<dbReference type="GO" id="GO:0005524">
    <property type="term" value="F:ATP binding"/>
    <property type="evidence" value="ECO:0007669"/>
    <property type="project" value="UniProtKB-KW"/>
</dbReference>
<dbReference type="GO" id="GO:0050567">
    <property type="term" value="F:glutaminyl-tRNA synthase (glutamine-hydrolyzing) activity"/>
    <property type="evidence" value="ECO:0007669"/>
    <property type="project" value="UniProtKB-UniRule"/>
</dbReference>
<dbReference type="GO" id="GO:0006520">
    <property type="term" value="P:amino acid metabolic process"/>
    <property type="evidence" value="ECO:0007669"/>
    <property type="project" value="InterPro"/>
</dbReference>
<dbReference type="GO" id="GO:0006450">
    <property type="term" value="P:regulation of translational fidelity"/>
    <property type="evidence" value="ECO:0007669"/>
    <property type="project" value="InterPro"/>
</dbReference>
<dbReference type="GO" id="GO:0006412">
    <property type="term" value="P:translation"/>
    <property type="evidence" value="ECO:0007669"/>
    <property type="project" value="UniProtKB-UniRule"/>
</dbReference>
<dbReference type="CDD" id="cd08962">
    <property type="entry name" value="GatD"/>
    <property type="match status" value="1"/>
</dbReference>
<dbReference type="Gene3D" id="2.30.30.520">
    <property type="match status" value="1"/>
</dbReference>
<dbReference type="Gene3D" id="3.40.50.40">
    <property type="match status" value="1"/>
</dbReference>
<dbReference type="Gene3D" id="3.40.50.1170">
    <property type="entry name" value="L-asparaginase, N-terminal domain"/>
    <property type="match status" value="1"/>
</dbReference>
<dbReference type="HAMAP" id="MF_00586">
    <property type="entry name" value="GatD"/>
    <property type="match status" value="1"/>
</dbReference>
<dbReference type="InterPro" id="IPR006033">
    <property type="entry name" value="AsnA_fam"/>
</dbReference>
<dbReference type="InterPro" id="IPR036152">
    <property type="entry name" value="Asp/glu_Ase-like_sf"/>
</dbReference>
<dbReference type="InterPro" id="IPR006034">
    <property type="entry name" value="Asparaginase/glutaminase-like"/>
</dbReference>
<dbReference type="InterPro" id="IPR020827">
    <property type="entry name" value="Asparaginase/glutaminase_AS1"/>
</dbReference>
<dbReference type="InterPro" id="IPR027475">
    <property type="entry name" value="Asparaginase/glutaminase_AS2"/>
</dbReference>
<dbReference type="InterPro" id="IPR040919">
    <property type="entry name" value="Asparaginase_C"/>
</dbReference>
<dbReference type="InterPro" id="IPR011878">
    <property type="entry name" value="GatD"/>
</dbReference>
<dbReference type="InterPro" id="IPR040918">
    <property type="entry name" value="GatD_N"/>
</dbReference>
<dbReference type="InterPro" id="IPR037222">
    <property type="entry name" value="GatD_N_sf"/>
</dbReference>
<dbReference type="InterPro" id="IPR027473">
    <property type="entry name" value="L-asparaginase_C"/>
</dbReference>
<dbReference type="InterPro" id="IPR027474">
    <property type="entry name" value="L-asparaginase_N"/>
</dbReference>
<dbReference type="InterPro" id="IPR037152">
    <property type="entry name" value="L-asparaginase_N_sf"/>
</dbReference>
<dbReference type="NCBIfam" id="TIGR00519">
    <property type="entry name" value="asnASE_I"/>
    <property type="match status" value="1"/>
</dbReference>
<dbReference type="NCBIfam" id="TIGR02153">
    <property type="entry name" value="gatD_arch"/>
    <property type="match status" value="1"/>
</dbReference>
<dbReference type="NCBIfam" id="NF003217">
    <property type="entry name" value="PRK04183.1"/>
    <property type="match status" value="1"/>
</dbReference>
<dbReference type="PANTHER" id="PTHR11707:SF28">
    <property type="entry name" value="60 KDA LYSOPHOSPHOLIPASE"/>
    <property type="match status" value="1"/>
</dbReference>
<dbReference type="PANTHER" id="PTHR11707">
    <property type="entry name" value="L-ASPARAGINASE"/>
    <property type="match status" value="1"/>
</dbReference>
<dbReference type="Pfam" id="PF00710">
    <property type="entry name" value="Asparaginase"/>
    <property type="match status" value="1"/>
</dbReference>
<dbReference type="Pfam" id="PF17763">
    <property type="entry name" value="Asparaginase_C"/>
    <property type="match status" value="1"/>
</dbReference>
<dbReference type="Pfam" id="PF18195">
    <property type="entry name" value="GatD_N"/>
    <property type="match status" value="1"/>
</dbReference>
<dbReference type="PIRSF" id="PIRSF500175">
    <property type="entry name" value="Glu_ADT_D"/>
    <property type="match status" value="1"/>
</dbReference>
<dbReference type="PIRSF" id="PIRSF001220">
    <property type="entry name" value="L-ASNase_gatD"/>
    <property type="match status" value="1"/>
</dbReference>
<dbReference type="PRINTS" id="PR00139">
    <property type="entry name" value="ASNGLNASE"/>
</dbReference>
<dbReference type="SFLD" id="SFLDS00057">
    <property type="entry name" value="Glutaminase/Asparaginase"/>
    <property type="match status" value="1"/>
</dbReference>
<dbReference type="SMART" id="SM00870">
    <property type="entry name" value="Asparaginase"/>
    <property type="match status" value="1"/>
</dbReference>
<dbReference type="SUPFAM" id="SSF141300">
    <property type="entry name" value="GatD N-terminal domain-like"/>
    <property type="match status" value="1"/>
</dbReference>
<dbReference type="SUPFAM" id="SSF53774">
    <property type="entry name" value="Glutaminase/Asparaginase"/>
    <property type="match status" value="1"/>
</dbReference>
<dbReference type="PROSITE" id="PS00144">
    <property type="entry name" value="ASN_GLN_ASE_1"/>
    <property type="match status" value="1"/>
</dbReference>
<dbReference type="PROSITE" id="PS00917">
    <property type="entry name" value="ASN_GLN_ASE_2"/>
    <property type="match status" value="1"/>
</dbReference>
<dbReference type="PROSITE" id="PS51732">
    <property type="entry name" value="ASN_GLN_ASE_3"/>
    <property type="match status" value="1"/>
</dbReference>
<accession>Q9HP20</accession>
<name>GATD_HALSA</name>
<feature type="chain" id="PRO_0000140050" description="Glutamyl-tRNA(Gln) amidotransferase subunit D">
    <location>
        <begin position="1"/>
        <end position="427"/>
    </location>
</feature>
<feature type="domain" description="Asparaginase/glutaminase" evidence="2">
    <location>
        <begin position="80"/>
        <end position="413"/>
    </location>
</feature>
<feature type="region of interest" description="Disordered" evidence="3">
    <location>
        <begin position="1"/>
        <end position="20"/>
    </location>
</feature>
<feature type="compositionally biased region" description="Basic and acidic residues" evidence="3">
    <location>
        <begin position="1"/>
        <end position="18"/>
    </location>
</feature>
<feature type="active site" evidence="1">
    <location>
        <position position="90"/>
    </location>
</feature>
<feature type="active site" evidence="1">
    <location>
        <position position="166"/>
    </location>
</feature>
<feature type="active site" evidence="1">
    <location>
        <position position="167"/>
    </location>
</feature>
<feature type="active site" evidence="1">
    <location>
        <position position="243"/>
    </location>
</feature>
<comment type="function">
    <text evidence="1">Allows the formation of correctly charged Gln-tRNA(Gln) through the transamidation of misacylated Glu-tRNA(Gln) in organisms which lack glutaminyl-tRNA synthetase. The reaction takes place in the presence of glutamine and ATP through an activated gamma-phospho-Glu-tRNA(Gln). The GatDE system is specific for glutamate and does not act on aspartate.</text>
</comment>
<comment type="catalytic activity">
    <reaction evidence="1">
        <text>L-glutamyl-tRNA(Gln) + L-glutamine + ATP + H2O = L-glutaminyl-tRNA(Gln) + L-glutamate + ADP + phosphate + H(+)</text>
        <dbReference type="Rhea" id="RHEA:17521"/>
        <dbReference type="Rhea" id="RHEA-COMP:9681"/>
        <dbReference type="Rhea" id="RHEA-COMP:9684"/>
        <dbReference type="ChEBI" id="CHEBI:15377"/>
        <dbReference type="ChEBI" id="CHEBI:15378"/>
        <dbReference type="ChEBI" id="CHEBI:29985"/>
        <dbReference type="ChEBI" id="CHEBI:30616"/>
        <dbReference type="ChEBI" id="CHEBI:43474"/>
        <dbReference type="ChEBI" id="CHEBI:58359"/>
        <dbReference type="ChEBI" id="CHEBI:78520"/>
        <dbReference type="ChEBI" id="CHEBI:78521"/>
        <dbReference type="ChEBI" id="CHEBI:456216"/>
    </reaction>
</comment>
<comment type="subunit">
    <text evidence="1">Heterodimer of GatD and GatE.</text>
</comment>
<comment type="similarity">
    <text evidence="1">Belongs to the asparaginase 1 family. GatD subfamily.</text>
</comment>